<organism>
    <name type="scientific">Mycosarcoma maydis</name>
    <name type="common">Corn smut fungus</name>
    <name type="synonym">Ustilago maydis</name>
    <dbReference type="NCBI Taxonomy" id="5270"/>
    <lineage>
        <taxon>Eukaryota</taxon>
        <taxon>Fungi</taxon>
        <taxon>Dikarya</taxon>
        <taxon>Basidiomycota</taxon>
        <taxon>Ustilaginomycotina</taxon>
        <taxon>Ustilaginomycetes</taxon>
        <taxon>Ustilaginales</taxon>
        <taxon>Ustilaginaceae</taxon>
        <taxon>Mycosarcoma</taxon>
    </lineage>
</organism>
<protein>
    <recommendedName>
        <fullName>Protein EFR3</fullName>
    </recommendedName>
</protein>
<dbReference type="EMBL" id="CM003143">
    <property type="protein sequence ID" value="KIS70146.1"/>
    <property type="molecule type" value="Genomic_DNA"/>
</dbReference>
<dbReference type="RefSeq" id="XP_011388257.1">
    <property type="nucleotide sequence ID" value="XM_011389955.1"/>
</dbReference>
<dbReference type="STRING" id="237631.Q4P3U5"/>
<dbReference type="EnsemblFungi" id="KIS70146">
    <property type="protein sequence ID" value="KIS70146"/>
    <property type="gene ID" value="UMAG_05218"/>
</dbReference>
<dbReference type="GeneID" id="23565167"/>
<dbReference type="KEGG" id="uma:UMAG_05218"/>
<dbReference type="VEuPathDB" id="FungiDB:UMAG_05218"/>
<dbReference type="eggNOG" id="KOG1877">
    <property type="taxonomic scope" value="Eukaryota"/>
</dbReference>
<dbReference type="HOGENOM" id="CLU_007481_0_0_1"/>
<dbReference type="InParanoid" id="Q4P3U5"/>
<dbReference type="OMA" id="EWTQYQY"/>
<dbReference type="OrthoDB" id="274691at2759"/>
<dbReference type="Proteomes" id="UP000000561">
    <property type="component" value="Chromosome 4"/>
</dbReference>
<dbReference type="GO" id="GO:0072659">
    <property type="term" value="P:protein localization to plasma membrane"/>
    <property type="evidence" value="ECO:0007669"/>
    <property type="project" value="InterPro"/>
</dbReference>
<dbReference type="InterPro" id="IPR039786">
    <property type="entry name" value="EFR3"/>
</dbReference>
<dbReference type="InterPro" id="IPR049150">
    <property type="entry name" value="EFR3_HEAT-like_rpt"/>
</dbReference>
<dbReference type="PANTHER" id="PTHR47766">
    <property type="entry name" value="PROTEIN EFR3"/>
    <property type="match status" value="1"/>
</dbReference>
<dbReference type="PANTHER" id="PTHR47766:SF1">
    <property type="entry name" value="PROTEIN EFR3"/>
    <property type="match status" value="1"/>
</dbReference>
<dbReference type="Pfam" id="PF21072">
    <property type="entry name" value="EFR3"/>
    <property type="match status" value="2"/>
</dbReference>
<sequence length="1037" mass="108900">MCIPKSNHKKLVDDCYPPPKALITSAPEYRPNSNELGRLTYYAQNKPAKLTKVGNLLESKAQADARAAKASGPAADKGKAALMITLAITKNLLTECKNSLNYFIKPSQSIIAAALDAAQPTSARPRDLEISARAASAFYALASFLDPASSVVDEGFQRLLRSFALLAVERPLGADATLGEDAEQRNRTRLIGLGALAGAVASDAIYSSNFKQLLSLLTPALVENAKANRVTLDWLRSESNKATEGEPTYAEFNIAKKPLAIRRTRSISAHVAGEKGPSSEDVISAAIGTLRGLLRHADAAQVQSIVQNVIAWLDNKSALSIPVPKDGRQLVSHWDDPEWCCWLAESLCSWTSLQYRFVVLDTLVDHLAENGEGKATNKHLSLIQMSRTILTGQLSLIGLSTSDTLSNLCALAVRRVYKDTRDSLLPPLVDCISGLGTHVYYADQINDIVEEISGRIAALQMPESISDAASVKASNNLGAVHRGQQQDLSSHLHRQRLANAGPEQRDESIRVLLFCLQGVLKATHQSSGEIHEAVDVKSNGAEKGKAAAASTDSKIGLAHAGTRNRVAPASILPTASLLASPNHAVRLAYAQTLITLFRDEFDREQLERESAVFAAAPIGEKVSDAIGVVHAIGAAAHVMCLSKSLSPPAQVLGNLRESPLELLPQIDRINADPGRPGSLSSGGSGTPAAESTAALPVDYVAVAQALEHAVTALPCSAALALTPMLVALDKDAGSRLTVHGATVNTGLENQRRLSSRMVAARVLAKLGETFDTDSVSRAAQGVLSQIPSLGIEPGPSPVGGLTLPSEVVPFSAVGSINQLGESSSSSSPSLNGALVINSLASSSKLQSATQLDAATLKRWLERDWNVGIAVDEAFAGSSPYAHSSLGTGSQQASRRPSYTPINGLSAGGNAFVNGSNASSASVNKNSRISMQAPSTGVNDLREALGTAASLSSKQANGTTQDGSLSTDRRASRRESRRGPVVTSANGSNGTSAVAILDSLKVGVDEDASRLGRDTSWSAIPAKGITNGTAPISPPYTS</sequence>
<gene>
    <name type="primary">EFR3</name>
    <name type="ORF">UMAG_05218</name>
</gene>
<feature type="chain" id="PRO_0000270784" description="Protein EFR3">
    <location>
        <begin position="1"/>
        <end position="1037"/>
    </location>
</feature>
<feature type="region of interest" description="Disordered" evidence="1">
    <location>
        <begin position="881"/>
        <end position="901"/>
    </location>
</feature>
<feature type="region of interest" description="Disordered" evidence="1">
    <location>
        <begin position="947"/>
        <end position="988"/>
    </location>
</feature>
<feature type="region of interest" description="Disordered" evidence="1">
    <location>
        <begin position="1006"/>
        <end position="1037"/>
    </location>
</feature>
<feature type="compositionally biased region" description="Polar residues" evidence="1">
    <location>
        <begin position="948"/>
        <end position="965"/>
    </location>
</feature>
<feature type="compositionally biased region" description="Basic and acidic residues" evidence="1">
    <location>
        <begin position="966"/>
        <end position="977"/>
    </location>
</feature>
<accession>Q4P3U5</accession>
<accession>A0A0D1E2V4</accession>
<name>EFR3_MYCMD</name>
<comment type="similarity">
    <text evidence="2">Belongs to the EFR3 family.</text>
</comment>
<reference key="1">
    <citation type="journal article" date="2006" name="Nature">
        <title>Insights from the genome of the biotrophic fungal plant pathogen Ustilago maydis.</title>
        <authorList>
            <person name="Kaemper J."/>
            <person name="Kahmann R."/>
            <person name="Boelker M."/>
            <person name="Ma L.-J."/>
            <person name="Brefort T."/>
            <person name="Saville B.J."/>
            <person name="Banuett F."/>
            <person name="Kronstad J.W."/>
            <person name="Gold S.E."/>
            <person name="Mueller O."/>
            <person name="Perlin M.H."/>
            <person name="Woesten H.A.B."/>
            <person name="de Vries R."/>
            <person name="Ruiz-Herrera J."/>
            <person name="Reynaga-Pena C.G."/>
            <person name="Snetselaar K."/>
            <person name="McCann M."/>
            <person name="Perez-Martin J."/>
            <person name="Feldbruegge M."/>
            <person name="Basse C.W."/>
            <person name="Steinberg G."/>
            <person name="Ibeas J.I."/>
            <person name="Holloman W."/>
            <person name="Guzman P."/>
            <person name="Farman M.L."/>
            <person name="Stajich J.E."/>
            <person name="Sentandreu R."/>
            <person name="Gonzalez-Prieto J.M."/>
            <person name="Kennell J.C."/>
            <person name="Molina L."/>
            <person name="Schirawski J."/>
            <person name="Mendoza-Mendoza A."/>
            <person name="Greilinger D."/>
            <person name="Muench K."/>
            <person name="Roessel N."/>
            <person name="Scherer M."/>
            <person name="Vranes M."/>
            <person name="Ladendorf O."/>
            <person name="Vincon V."/>
            <person name="Fuchs U."/>
            <person name="Sandrock B."/>
            <person name="Meng S."/>
            <person name="Ho E.C.H."/>
            <person name="Cahill M.J."/>
            <person name="Boyce K.J."/>
            <person name="Klose J."/>
            <person name="Klosterman S.J."/>
            <person name="Deelstra H.J."/>
            <person name="Ortiz-Castellanos L."/>
            <person name="Li W."/>
            <person name="Sanchez-Alonso P."/>
            <person name="Schreier P.H."/>
            <person name="Haeuser-Hahn I."/>
            <person name="Vaupel M."/>
            <person name="Koopmann E."/>
            <person name="Friedrich G."/>
            <person name="Voss H."/>
            <person name="Schlueter T."/>
            <person name="Margolis J."/>
            <person name="Platt D."/>
            <person name="Swimmer C."/>
            <person name="Gnirke A."/>
            <person name="Chen F."/>
            <person name="Vysotskaia V."/>
            <person name="Mannhaupt G."/>
            <person name="Gueldener U."/>
            <person name="Muensterkoetter M."/>
            <person name="Haase D."/>
            <person name="Oesterheld M."/>
            <person name="Mewes H.-W."/>
            <person name="Mauceli E.W."/>
            <person name="DeCaprio D."/>
            <person name="Wade C.M."/>
            <person name="Butler J."/>
            <person name="Young S.K."/>
            <person name="Jaffe D.B."/>
            <person name="Calvo S.E."/>
            <person name="Nusbaum C."/>
            <person name="Galagan J.E."/>
            <person name="Birren B.W."/>
        </authorList>
    </citation>
    <scope>NUCLEOTIDE SEQUENCE [LARGE SCALE GENOMIC DNA]</scope>
    <source>
        <strain>DSM 14603 / FGSC 9021 / UM521</strain>
    </source>
</reference>
<reference key="2">
    <citation type="submission" date="2014-09" db="EMBL/GenBank/DDBJ databases">
        <authorList>
            <person name="Gueldener U."/>
            <person name="Muensterkoetter M."/>
            <person name="Walter M.C."/>
            <person name="Mannhaupt G."/>
            <person name="Kahmann R."/>
        </authorList>
    </citation>
    <scope>GENOME REANNOTATION</scope>
    <source>
        <strain>DSM 14603 / FGSC 9021 / UM521</strain>
    </source>
</reference>
<evidence type="ECO:0000256" key="1">
    <source>
        <dbReference type="SAM" id="MobiDB-lite"/>
    </source>
</evidence>
<evidence type="ECO:0000305" key="2"/>
<proteinExistence type="inferred from homology"/>
<keyword id="KW-1185">Reference proteome</keyword>